<sequence>MSVTVVLGSQWGDEGKGKLVDILSAEVDICAHCAGGSNAGHTIVVPVGPEDLRVPFAPQWCLLNPACTGLIGSGVVVHLPSLFSELDALAAQGLDCTNRLFISDRAHLVFDFHRIVDGLKEVELGGSWYHWDNQKWIGPAYSSKASRSGLRVHHLFDDTFAEKFRKLVEGWFKRYGKFEYDTEGEILRYKVLAERLRPCVIDCVVYIHHAISSGKRVLVEGANALMLDLDFGTYPFVTSSSTSVGGVCTGLGIPPKMIGKPIGVVKAYTTRVGGGPFPTEQLNDVGTHLQEVGREFGTNTGRRRRCGWLDLVVLKYSCMINGFDTLNITKLDILDKLPEIKVGVKYLVDGKELSGFPADLDLLAKVDVEYATLPGWNTSIVDVTSCDALPENCRKYIEYIETFLGVPVEWIGVGPGRNSMLIKEVT</sequence>
<dbReference type="EC" id="6.3.4.4" evidence="2"/>
<dbReference type="EMBL" id="DS547136">
    <property type="protein sequence ID" value="EDR01747.1"/>
    <property type="molecule type" value="Genomic_DNA"/>
</dbReference>
<dbReference type="RefSeq" id="XP_001887560.1">
    <property type="nucleotide sequence ID" value="XM_001887525.1"/>
</dbReference>
<dbReference type="SMR" id="B0DUI8"/>
<dbReference type="FunCoup" id="B0DUI8">
    <property type="interactions" value="559"/>
</dbReference>
<dbReference type="STRING" id="486041.B0DUI8"/>
<dbReference type="GeneID" id="6083266"/>
<dbReference type="KEGG" id="lbc:LACBIDRAFT_333008"/>
<dbReference type="HOGENOM" id="CLU_029848_3_2_1"/>
<dbReference type="InParanoid" id="B0DUI8"/>
<dbReference type="OrthoDB" id="10265645at2759"/>
<dbReference type="UniPathway" id="UPA00075">
    <property type="reaction ID" value="UER00335"/>
</dbReference>
<dbReference type="Proteomes" id="UP000001194">
    <property type="component" value="Unassembled WGS sequence"/>
</dbReference>
<dbReference type="GO" id="GO:0005737">
    <property type="term" value="C:cytoplasm"/>
    <property type="evidence" value="ECO:0007669"/>
    <property type="project" value="UniProtKB-SubCell"/>
</dbReference>
<dbReference type="GO" id="GO:0004019">
    <property type="term" value="F:adenylosuccinate synthase activity"/>
    <property type="evidence" value="ECO:0007669"/>
    <property type="project" value="UniProtKB-UniRule"/>
</dbReference>
<dbReference type="GO" id="GO:0005525">
    <property type="term" value="F:GTP binding"/>
    <property type="evidence" value="ECO:0007669"/>
    <property type="project" value="UniProtKB-UniRule"/>
</dbReference>
<dbReference type="GO" id="GO:0000287">
    <property type="term" value="F:magnesium ion binding"/>
    <property type="evidence" value="ECO:0007669"/>
    <property type="project" value="UniProtKB-UniRule"/>
</dbReference>
<dbReference type="GO" id="GO:0044208">
    <property type="term" value="P:'de novo' AMP biosynthetic process"/>
    <property type="evidence" value="ECO:0007669"/>
    <property type="project" value="UniProtKB-UniRule"/>
</dbReference>
<dbReference type="GO" id="GO:0046040">
    <property type="term" value="P:IMP metabolic process"/>
    <property type="evidence" value="ECO:0007669"/>
    <property type="project" value="TreeGrafter"/>
</dbReference>
<dbReference type="CDD" id="cd03108">
    <property type="entry name" value="AdSS"/>
    <property type="match status" value="1"/>
</dbReference>
<dbReference type="FunFam" id="3.90.170.10:FF:000001">
    <property type="entry name" value="Adenylosuccinate synthetase"/>
    <property type="match status" value="1"/>
</dbReference>
<dbReference type="Gene3D" id="3.40.440.10">
    <property type="entry name" value="Adenylosuccinate Synthetase, subunit A, domain 1"/>
    <property type="match status" value="1"/>
</dbReference>
<dbReference type="Gene3D" id="1.10.300.10">
    <property type="entry name" value="Adenylosuccinate Synthetase, subunit A, domain 2"/>
    <property type="match status" value="1"/>
</dbReference>
<dbReference type="Gene3D" id="3.90.170.10">
    <property type="entry name" value="Adenylosuccinate Synthetase, subunit A, domain 3"/>
    <property type="match status" value="1"/>
</dbReference>
<dbReference type="HAMAP" id="MF_00011">
    <property type="entry name" value="Adenylosucc_synth"/>
    <property type="match status" value="1"/>
</dbReference>
<dbReference type="InterPro" id="IPR018220">
    <property type="entry name" value="Adenylosuccin_syn_GTP-bd"/>
</dbReference>
<dbReference type="InterPro" id="IPR042109">
    <property type="entry name" value="Adenylosuccinate_synth_dom1"/>
</dbReference>
<dbReference type="InterPro" id="IPR042110">
    <property type="entry name" value="Adenylosuccinate_synth_dom2"/>
</dbReference>
<dbReference type="InterPro" id="IPR042111">
    <property type="entry name" value="Adenylosuccinate_synth_dom3"/>
</dbReference>
<dbReference type="InterPro" id="IPR001114">
    <property type="entry name" value="Adenylosuccinate_synthetase"/>
</dbReference>
<dbReference type="InterPro" id="IPR027417">
    <property type="entry name" value="P-loop_NTPase"/>
</dbReference>
<dbReference type="NCBIfam" id="NF002223">
    <property type="entry name" value="PRK01117.1"/>
    <property type="match status" value="1"/>
</dbReference>
<dbReference type="NCBIfam" id="TIGR00184">
    <property type="entry name" value="purA"/>
    <property type="match status" value="1"/>
</dbReference>
<dbReference type="PANTHER" id="PTHR11846">
    <property type="entry name" value="ADENYLOSUCCINATE SYNTHETASE"/>
    <property type="match status" value="1"/>
</dbReference>
<dbReference type="PANTHER" id="PTHR11846:SF0">
    <property type="entry name" value="ADENYLOSUCCINATE SYNTHETASE"/>
    <property type="match status" value="1"/>
</dbReference>
<dbReference type="Pfam" id="PF00709">
    <property type="entry name" value="Adenylsucc_synt"/>
    <property type="match status" value="1"/>
</dbReference>
<dbReference type="SMART" id="SM00788">
    <property type="entry name" value="Adenylsucc_synt"/>
    <property type="match status" value="1"/>
</dbReference>
<dbReference type="SUPFAM" id="SSF52540">
    <property type="entry name" value="P-loop containing nucleoside triphosphate hydrolases"/>
    <property type="match status" value="1"/>
</dbReference>
<dbReference type="PROSITE" id="PS01266">
    <property type="entry name" value="ADENYLOSUCCIN_SYN_1"/>
    <property type="match status" value="1"/>
</dbReference>
<organism>
    <name type="scientific">Laccaria bicolor (strain S238N-H82 / ATCC MYA-4686)</name>
    <name type="common">Bicoloured deceiver</name>
    <name type="synonym">Laccaria laccata var. bicolor</name>
    <dbReference type="NCBI Taxonomy" id="486041"/>
    <lineage>
        <taxon>Eukaryota</taxon>
        <taxon>Fungi</taxon>
        <taxon>Dikarya</taxon>
        <taxon>Basidiomycota</taxon>
        <taxon>Agaricomycotina</taxon>
        <taxon>Agaricomycetes</taxon>
        <taxon>Agaricomycetidae</taxon>
        <taxon>Agaricales</taxon>
        <taxon>Agaricineae</taxon>
        <taxon>Hydnangiaceae</taxon>
        <taxon>Laccaria</taxon>
    </lineage>
</organism>
<name>PURA2_LACBS</name>
<proteinExistence type="inferred from homology"/>
<feature type="chain" id="PRO_0000399339" description="Adenylosuccinate synthetase 2">
    <location>
        <begin position="1"/>
        <end position="426"/>
    </location>
</feature>
<feature type="active site" description="Proton acceptor" evidence="2">
    <location>
        <position position="13"/>
    </location>
</feature>
<feature type="active site" description="Proton donor" evidence="2">
    <location>
        <position position="41"/>
    </location>
</feature>
<feature type="binding site" evidence="2">
    <location>
        <begin position="12"/>
        <end position="18"/>
    </location>
    <ligand>
        <name>GTP</name>
        <dbReference type="ChEBI" id="CHEBI:37565"/>
    </ligand>
</feature>
<feature type="binding site" description="in other chain" evidence="2">
    <location>
        <begin position="13"/>
        <end position="16"/>
    </location>
    <ligand>
        <name>IMP</name>
        <dbReference type="ChEBI" id="CHEBI:58053"/>
        <note>ligand shared between dimeric partners</note>
    </ligand>
</feature>
<feature type="binding site" evidence="2">
    <location>
        <position position="13"/>
    </location>
    <ligand>
        <name>Mg(2+)</name>
        <dbReference type="ChEBI" id="CHEBI:18420"/>
    </ligand>
</feature>
<feature type="binding site" description="in other chain" evidence="2">
    <location>
        <begin position="38"/>
        <end position="41"/>
    </location>
    <ligand>
        <name>IMP</name>
        <dbReference type="ChEBI" id="CHEBI:58053"/>
        <note>ligand shared between dimeric partners</note>
    </ligand>
</feature>
<feature type="binding site" evidence="2">
    <location>
        <begin position="40"/>
        <end position="42"/>
    </location>
    <ligand>
        <name>GTP</name>
        <dbReference type="ChEBI" id="CHEBI:37565"/>
    </ligand>
</feature>
<feature type="binding site" evidence="2">
    <location>
        <position position="40"/>
    </location>
    <ligand>
        <name>Mg(2+)</name>
        <dbReference type="ChEBI" id="CHEBI:18420"/>
    </ligand>
</feature>
<feature type="binding site" evidence="2">
    <location>
        <position position="147"/>
    </location>
    <ligand>
        <name>IMP</name>
        <dbReference type="ChEBI" id="CHEBI:58053"/>
        <note>ligand shared between dimeric partners</note>
    </ligand>
</feature>
<feature type="binding site" description="in other chain" evidence="2">
    <location>
        <position position="223"/>
    </location>
    <ligand>
        <name>IMP</name>
        <dbReference type="ChEBI" id="CHEBI:58053"/>
        <note>ligand shared between dimeric partners</note>
    </ligand>
</feature>
<feature type="binding site" description="in other chain" evidence="2">
    <location>
        <position position="238"/>
    </location>
    <ligand>
        <name>IMP</name>
        <dbReference type="ChEBI" id="CHEBI:58053"/>
        <note>ligand shared between dimeric partners</note>
    </ligand>
</feature>
<feature type="binding site" evidence="2">
    <location>
        <begin position="298"/>
        <end position="304"/>
    </location>
    <ligand>
        <name>substrate</name>
    </ligand>
</feature>
<feature type="binding site" description="in other chain" evidence="2">
    <location>
        <position position="302"/>
    </location>
    <ligand>
        <name>IMP</name>
        <dbReference type="ChEBI" id="CHEBI:58053"/>
        <note>ligand shared between dimeric partners</note>
    </ligand>
</feature>
<feature type="binding site" evidence="2">
    <location>
        <position position="304"/>
    </location>
    <ligand>
        <name>GTP</name>
        <dbReference type="ChEBI" id="CHEBI:37565"/>
    </ligand>
</feature>
<feature type="binding site" evidence="2">
    <location>
        <begin position="330"/>
        <end position="332"/>
    </location>
    <ligand>
        <name>GTP</name>
        <dbReference type="ChEBI" id="CHEBI:37565"/>
    </ligand>
</feature>
<feature type="binding site" evidence="2">
    <location>
        <begin position="412"/>
        <end position="414"/>
    </location>
    <ligand>
        <name>GTP</name>
        <dbReference type="ChEBI" id="CHEBI:37565"/>
    </ligand>
</feature>
<keyword id="KW-0963">Cytoplasm</keyword>
<keyword id="KW-0342">GTP-binding</keyword>
<keyword id="KW-0436">Ligase</keyword>
<keyword id="KW-0460">Magnesium</keyword>
<keyword id="KW-0479">Metal-binding</keyword>
<keyword id="KW-0547">Nucleotide-binding</keyword>
<keyword id="KW-0658">Purine biosynthesis</keyword>
<keyword id="KW-1185">Reference proteome</keyword>
<accession>B0DUI8</accession>
<reference key="1">
    <citation type="journal article" date="2008" name="Nature">
        <title>The genome of Laccaria bicolor provides insights into mycorrhizal symbiosis.</title>
        <authorList>
            <person name="Martin F."/>
            <person name="Aerts A."/>
            <person name="Ahren D."/>
            <person name="Brun A."/>
            <person name="Danchin E.G.J."/>
            <person name="Duchaussoy F."/>
            <person name="Gibon J."/>
            <person name="Kohler A."/>
            <person name="Lindquist E."/>
            <person name="Pereda V."/>
            <person name="Salamov A."/>
            <person name="Shapiro H.J."/>
            <person name="Wuyts J."/>
            <person name="Blaudez D."/>
            <person name="Buee M."/>
            <person name="Brokstein P."/>
            <person name="Canbaeck B."/>
            <person name="Cohen D."/>
            <person name="Courty P.E."/>
            <person name="Coutinho P.M."/>
            <person name="Delaruelle C."/>
            <person name="Detter J.C."/>
            <person name="Deveau A."/>
            <person name="DiFazio S."/>
            <person name="Duplessis S."/>
            <person name="Fraissinet-Tachet L."/>
            <person name="Lucic E."/>
            <person name="Frey-Klett P."/>
            <person name="Fourrey C."/>
            <person name="Feussner I."/>
            <person name="Gay G."/>
            <person name="Grimwood J."/>
            <person name="Hoegger P.J."/>
            <person name="Jain P."/>
            <person name="Kilaru S."/>
            <person name="Labbe J."/>
            <person name="Lin Y.C."/>
            <person name="Legue V."/>
            <person name="Le Tacon F."/>
            <person name="Marmeisse R."/>
            <person name="Melayah D."/>
            <person name="Montanini B."/>
            <person name="Muratet M."/>
            <person name="Nehls U."/>
            <person name="Niculita-Hirzel H."/>
            <person name="Oudot-Le Secq M.P."/>
            <person name="Peter M."/>
            <person name="Quesneville H."/>
            <person name="Rajashekar B."/>
            <person name="Reich M."/>
            <person name="Rouhier N."/>
            <person name="Schmutz J."/>
            <person name="Yin T."/>
            <person name="Chalot M."/>
            <person name="Henrissat B."/>
            <person name="Kuees U."/>
            <person name="Lucas S."/>
            <person name="Van de Peer Y."/>
            <person name="Podila G.K."/>
            <person name="Polle A."/>
            <person name="Pukkila P.J."/>
            <person name="Richardson P.M."/>
            <person name="Rouze P."/>
            <person name="Sanders I.R."/>
            <person name="Stajich J.E."/>
            <person name="Tunlid A."/>
            <person name="Tuskan G."/>
            <person name="Grigoriev I.V."/>
        </authorList>
    </citation>
    <scope>NUCLEOTIDE SEQUENCE [LARGE SCALE GENOMIC DNA]</scope>
    <source>
        <strain>S238N-H82 / ATCC MYA-4686</strain>
    </source>
</reference>
<evidence type="ECO:0000250" key="1"/>
<evidence type="ECO:0000255" key="2">
    <source>
        <dbReference type="HAMAP-Rule" id="MF_03125"/>
    </source>
</evidence>
<gene>
    <name type="ORF">LACBIDRAFT_333008</name>
</gene>
<protein>
    <recommendedName>
        <fullName evidence="2">Adenylosuccinate synthetase 2</fullName>
        <shortName evidence="2">AMPSase 2</shortName>
        <shortName evidence="2">AdSS 2</shortName>
        <ecNumber evidence="2">6.3.4.4</ecNumber>
    </recommendedName>
    <alternativeName>
        <fullName evidence="2">IMP--aspartate ligase 2</fullName>
    </alternativeName>
</protein>
<comment type="function">
    <text evidence="1">Plays an important role in the de novo pathway and in the salvage pathway of purine nucleotide biosynthesis. Catalyzes the first committed step in the biosynthesis of AMP from IMP (By similarity).</text>
</comment>
<comment type="catalytic activity">
    <reaction evidence="2">
        <text>IMP + L-aspartate + GTP = N(6)-(1,2-dicarboxyethyl)-AMP + GDP + phosphate + 2 H(+)</text>
        <dbReference type="Rhea" id="RHEA:15753"/>
        <dbReference type="ChEBI" id="CHEBI:15378"/>
        <dbReference type="ChEBI" id="CHEBI:29991"/>
        <dbReference type="ChEBI" id="CHEBI:37565"/>
        <dbReference type="ChEBI" id="CHEBI:43474"/>
        <dbReference type="ChEBI" id="CHEBI:57567"/>
        <dbReference type="ChEBI" id="CHEBI:58053"/>
        <dbReference type="ChEBI" id="CHEBI:58189"/>
        <dbReference type="EC" id="6.3.4.4"/>
    </reaction>
</comment>
<comment type="cofactor">
    <cofactor evidence="2">
        <name>Mg(2+)</name>
        <dbReference type="ChEBI" id="CHEBI:18420"/>
    </cofactor>
    <text evidence="2">Binds 1 Mg(2+) ion per subunit.</text>
</comment>
<comment type="pathway">
    <text evidence="2">Purine metabolism; AMP biosynthesis via de novo pathway; AMP from IMP: step 1/2.</text>
</comment>
<comment type="subunit">
    <text evidence="2">Homodimer.</text>
</comment>
<comment type="subcellular location">
    <subcellularLocation>
        <location evidence="2">Cytoplasm</location>
    </subcellularLocation>
</comment>
<comment type="similarity">
    <text evidence="2">Belongs to the adenylosuccinate synthetase family.</text>
</comment>